<name>BTAF1_YEAST</name>
<reference key="1">
    <citation type="journal article" date="1992" name="Mol. Cell. Biol.">
        <title>A presumptive helicase (MOT1 gene product) affects gene expression and is required for viability in the yeast Saccharomyces cerevisiae.</title>
        <authorList>
            <person name="Davis J.L."/>
            <person name="Kunisawa R."/>
            <person name="Thorner J."/>
        </authorList>
    </citation>
    <scope>NUCLEOTIDE SEQUENCE [GENOMIC DNA]</scope>
</reference>
<reference key="2">
    <citation type="journal article" date="1997" name="Nature">
        <title>The nucleotide sequence of Saccharomyces cerevisiae chromosome XVI.</title>
        <authorList>
            <person name="Bussey H."/>
            <person name="Storms R.K."/>
            <person name="Ahmed A."/>
            <person name="Albermann K."/>
            <person name="Allen E."/>
            <person name="Ansorge W."/>
            <person name="Araujo R."/>
            <person name="Aparicio A."/>
            <person name="Barrell B.G."/>
            <person name="Badcock K."/>
            <person name="Benes V."/>
            <person name="Botstein D."/>
            <person name="Bowman S."/>
            <person name="Brueckner M."/>
            <person name="Carpenter J."/>
            <person name="Cherry J.M."/>
            <person name="Chung E."/>
            <person name="Churcher C.M."/>
            <person name="Coster F."/>
            <person name="Davis K."/>
            <person name="Davis R.W."/>
            <person name="Dietrich F.S."/>
            <person name="Delius H."/>
            <person name="DiPaolo T."/>
            <person name="Dubois E."/>
            <person name="Duesterhoeft A."/>
            <person name="Duncan M."/>
            <person name="Floeth M."/>
            <person name="Fortin N."/>
            <person name="Friesen J.D."/>
            <person name="Fritz C."/>
            <person name="Goffeau A."/>
            <person name="Hall J."/>
            <person name="Hebling U."/>
            <person name="Heumann K."/>
            <person name="Hilbert H."/>
            <person name="Hillier L.W."/>
            <person name="Hunicke-Smith S."/>
            <person name="Hyman R.W."/>
            <person name="Johnston M."/>
            <person name="Kalman S."/>
            <person name="Kleine K."/>
            <person name="Komp C."/>
            <person name="Kurdi O."/>
            <person name="Lashkari D."/>
            <person name="Lew H."/>
            <person name="Lin A."/>
            <person name="Lin D."/>
            <person name="Louis E.J."/>
            <person name="Marathe R."/>
            <person name="Messenguy F."/>
            <person name="Mewes H.-W."/>
            <person name="Mirtipati S."/>
            <person name="Moestl D."/>
            <person name="Mueller-Auer S."/>
            <person name="Namath A."/>
            <person name="Nentwich U."/>
            <person name="Oefner P."/>
            <person name="Pearson D."/>
            <person name="Petel F.X."/>
            <person name="Pohl T.M."/>
            <person name="Purnelle B."/>
            <person name="Rajandream M.A."/>
            <person name="Rechmann S."/>
            <person name="Rieger M."/>
            <person name="Riles L."/>
            <person name="Roberts D."/>
            <person name="Schaefer M."/>
            <person name="Scharfe M."/>
            <person name="Scherens B."/>
            <person name="Schramm S."/>
            <person name="Schroeder M."/>
            <person name="Sdicu A.-M."/>
            <person name="Tettelin H."/>
            <person name="Urrestarazu L.A."/>
            <person name="Ushinsky S."/>
            <person name="Vierendeels F."/>
            <person name="Vissers S."/>
            <person name="Voss H."/>
            <person name="Walsh S.V."/>
            <person name="Wambutt R."/>
            <person name="Wang Y."/>
            <person name="Wedler E."/>
            <person name="Wedler H."/>
            <person name="Winnett E."/>
            <person name="Zhong W.-W."/>
            <person name="Zollner A."/>
            <person name="Vo D.H."/>
            <person name="Hani J."/>
        </authorList>
    </citation>
    <scope>NUCLEOTIDE SEQUENCE [LARGE SCALE GENOMIC DNA]</scope>
    <source>
        <strain>ATCC 204508 / S288c</strain>
    </source>
</reference>
<reference key="3">
    <citation type="journal article" date="2014" name="G3 (Bethesda)">
        <title>The reference genome sequence of Saccharomyces cerevisiae: Then and now.</title>
        <authorList>
            <person name="Engel S.R."/>
            <person name="Dietrich F.S."/>
            <person name="Fisk D.G."/>
            <person name="Binkley G."/>
            <person name="Balakrishnan R."/>
            <person name="Costanzo M.C."/>
            <person name="Dwight S.S."/>
            <person name="Hitz B.C."/>
            <person name="Karra K."/>
            <person name="Nash R.S."/>
            <person name="Weng S."/>
            <person name="Wong E.D."/>
            <person name="Lloyd P."/>
            <person name="Skrzypek M.S."/>
            <person name="Miyasato S.R."/>
            <person name="Simison M."/>
            <person name="Cherry J.M."/>
        </authorList>
    </citation>
    <scope>GENOME REANNOTATION</scope>
    <source>
        <strain>ATCC 204508 / S288c</strain>
    </source>
</reference>
<reference key="4">
    <citation type="journal article" date="1997" name="Mol. Cell. Biol.">
        <title>Molecular analysis of the SNF2/SWI2 protein family member MOT1, an ATP-driven enzyme that dissociates TATA-binding protein from DNA.</title>
        <authorList>
            <person name="Auble D.T."/>
            <person name="Wang D."/>
            <person name="Post K.W."/>
            <person name="Hahn S."/>
        </authorList>
    </citation>
    <scope>FUNCTION</scope>
    <scope>ATPASE ACTIVITY</scope>
</reference>
<reference key="5">
    <citation type="journal article" date="2002" name="Proc. Natl. Acad. Sci. U.S.A.">
        <title>Mot1 activates and represses transcription by direct, ATPase-dependent mechanisms.</title>
        <authorList>
            <person name="Dasgupta A."/>
            <person name="Darst R.P."/>
            <person name="Martin K.J."/>
            <person name="Afshari C.A."/>
            <person name="Auble D.T."/>
        </authorList>
    </citation>
    <scope>FUNCTION</scope>
    <scope>SUBCELLULAR LOCATION</scope>
    <scope>MUTAGENESIS OF LYS-1303</scope>
</reference>
<reference key="6">
    <citation type="journal article" date="2003" name="EMBO J.">
        <title>High-affinity DNA binding by a Mot1p-TBP complex: implications for TAF-independent transcription.</title>
        <authorList>
            <person name="Gumbs O.H."/>
            <person name="Campbell A.M."/>
            <person name="Weil P.A."/>
        </authorList>
    </citation>
    <scope>FUNCTION</scope>
    <scope>SUBUNIT</scope>
</reference>
<reference key="7">
    <citation type="journal article" date="2003" name="Nature">
        <title>Global analysis of protein localization in budding yeast.</title>
        <authorList>
            <person name="Huh W.-K."/>
            <person name="Falvo J.V."/>
            <person name="Gerke L.C."/>
            <person name="Carroll A.S."/>
            <person name="Howson R.W."/>
            <person name="Weissman J.S."/>
            <person name="O'Shea E.K."/>
        </authorList>
    </citation>
    <scope>SUBCELLULAR LOCATION [LARGE SCALE ANALYSIS]</scope>
</reference>
<reference key="8">
    <citation type="journal article" date="2003" name="Nature">
        <title>Global analysis of protein expression in yeast.</title>
        <authorList>
            <person name="Ghaemmaghami S."/>
            <person name="Huh W.-K."/>
            <person name="Bower K."/>
            <person name="Howson R.W."/>
            <person name="Belle A."/>
            <person name="Dephoure N."/>
            <person name="O'Shea E.K."/>
            <person name="Weissman J.S."/>
        </authorList>
    </citation>
    <scope>LEVEL OF PROTEIN EXPRESSION [LARGE SCALE ANALYSIS]</scope>
</reference>
<reference key="9">
    <citation type="journal article" date="2003" name="Proc. Natl. Acad. Sci. U.S.A.">
        <title>The proteome of Saccharomyces cerevisiae mitochondria.</title>
        <authorList>
            <person name="Sickmann A."/>
            <person name="Reinders J."/>
            <person name="Wagner Y."/>
            <person name="Joppich C."/>
            <person name="Zahedi R.P."/>
            <person name="Meyer H.E."/>
            <person name="Schoenfisch B."/>
            <person name="Perschil I."/>
            <person name="Chacinska A."/>
            <person name="Guiard B."/>
            <person name="Rehling P."/>
            <person name="Pfanner N."/>
            <person name="Meisinger C."/>
        </authorList>
    </citation>
    <scope>SUBCELLULAR LOCATION [LARGE SCALE ANALYSIS]</scope>
    <source>
        <strain>ATCC 76625 / YPH499</strain>
    </source>
</reference>
<reference key="10">
    <citation type="journal article" date="2006" name="Genetics">
        <title>Genetic analysis connects SLX5 and SLX8 to the SUMO pathway in Saccharomyces cerevisiae.</title>
        <authorList>
            <person name="Wang Z."/>
            <person name="Jones G.M."/>
            <person name="Prelich G."/>
        </authorList>
    </citation>
    <scope>MUTAGENESIS OF GLU-1226</scope>
</reference>
<reference key="11">
    <citation type="journal article" date="2007" name="J. Proteome Res.">
        <title>Large-scale phosphorylation analysis of alpha-factor-arrested Saccharomyces cerevisiae.</title>
        <authorList>
            <person name="Li X."/>
            <person name="Gerber S.A."/>
            <person name="Rudner A.D."/>
            <person name="Beausoleil S.A."/>
            <person name="Haas W."/>
            <person name="Villen J."/>
            <person name="Elias J.E."/>
            <person name="Gygi S.P."/>
        </authorList>
    </citation>
    <scope>PHOSPHORYLATION [LARGE SCALE ANALYSIS] AT SER-677</scope>
    <scope>IDENTIFICATION BY MASS SPECTROMETRY [LARGE SCALE ANALYSIS]</scope>
    <source>
        <strain>ADR376</strain>
    </source>
</reference>
<reference key="12">
    <citation type="journal article" date="2007" name="Proc. Natl. Acad. Sci. U.S.A.">
        <title>Analysis of phosphorylation sites on proteins from Saccharomyces cerevisiae by electron transfer dissociation (ETD) mass spectrometry.</title>
        <authorList>
            <person name="Chi A."/>
            <person name="Huttenhower C."/>
            <person name="Geer L.Y."/>
            <person name="Coon J.J."/>
            <person name="Syka J.E.P."/>
            <person name="Bai D.L."/>
            <person name="Shabanowitz J."/>
            <person name="Burke D.J."/>
            <person name="Troyanskaya O.G."/>
            <person name="Hunt D.F."/>
        </authorList>
    </citation>
    <scope>PHOSPHORYLATION [LARGE SCALE ANALYSIS] AT SER-677</scope>
    <scope>IDENTIFICATION BY MASS SPECTROMETRY [LARGE SCALE ANALYSIS]</scope>
</reference>
<reference key="13">
    <citation type="journal article" date="2008" name="Mol. Cell. Proteomics">
        <title>A multidimensional chromatography technology for in-depth phosphoproteome analysis.</title>
        <authorList>
            <person name="Albuquerque C.P."/>
            <person name="Smolka M.B."/>
            <person name="Payne S.H."/>
            <person name="Bafna V."/>
            <person name="Eng J."/>
            <person name="Zhou H."/>
        </authorList>
    </citation>
    <scope>PHOSPHORYLATION [LARGE SCALE ANALYSIS] AT SER-677</scope>
    <scope>IDENTIFICATION BY MASS SPECTROMETRY [LARGE SCALE ANALYSIS]</scope>
</reference>
<reference key="14">
    <citation type="journal article" date="2009" name="Science">
        <title>Global analysis of Cdk1 substrate phosphorylation sites provides insights into evolution.</title>
        <authorList>
            <person name="Holt L.J."/>
            <person name="Tuch B.B."/>
            <person name="Villen J."/>
            <person name="Johnson A.D."/>
            <person name="Gygi S.P."/>
            <person name="Morgan D.O."/>
        </authorList>
    </citation>
    <scope>PHOSPHORYLATION [LARGE SCALE ANALYSIS] AT SER-93 AND SER-677</scope>
    <scope>IDENTIFICATION BY MASS SPECTROMETRY [LARGE SCALE ANALYSIS]</scope>
</reference>
<evidence type="ECO:0000255" key="1"/>
<evidence type="ECO:0000255" key="2">
    <source>
        <dbReference type="PROSITE-ProRule" id="PRU00541"/>
    </source>
</evidence>
<evidence type="ECO:0000255" key="3">
    <source>
        <dbReference type="PROSITE-ProRule" id="PRU00542"/>
    </source>
</evidence>
<evidence type="ECO:0000256" key="4">
    <source>
        <dbReference type="SAM" id="MobiDB-lite"/>
    </source>
</evidence>
<evidence type="ECO:0000269" key="5">
    <source>
    </source>
</evidence>
<evidence type="ECO:0000269" key="6">
    <source>
    </source>
</evidence>
<evidence type="ECO:0000269" key="7">
    <source>
    </source>
</evidence>
<evidence type="ECO:0000269" key="8">
    <source>
    </source>
</evidence>
<evidence type="ECO:0000269" key="9">
    <source>
    </source>
</evidence>
<evidence type="ECO:0000305" key="10"/>
<evidence type="ECO:0007744" key="11">
    <source>
    </source>
</evidence>
<evidence type="ECO:0007744" key="12">
    <source>
    </source>
</evidence>
<evidence type="ECO:0007744" key="13">
    <source>
    </source>
</evidence>
<evidence type="ECO:0007744" key="14">
    <source>
    </source>
</evidence>
<gene>
    <name type="primary">MOT1</name>
    <name type="ordered locus">YPL082C</name>
    <name type="ORF">LPF4C</name>
</gene>
<sequence length="1867" mass="209977">MTSRVSRLDRQVILIETGSTQVVRNMAADQMGDLAKQHPEDILSLLSRVYPFLLVKKWETRVTAARAVGGIVAHAPSWDPNESDLVGGTNEGSPLDNAQVKLEHEMKIKLEEATQNNQLNLLQEDHHLSSLSDWKLNEILKSGKVLLASSMNDYNVLGKADDNIRKQAKTDDIKQETSMLNASDKANENKSNANKKSARMLAMARRKKKMSAKNTPKHPVDITESSVSKTLLNGKNMTNSAASLATSPTSNQLNPKLEITEQADESKLMIESTVRPLLEQHEIVAGLVWQFQGIYELLLDNLMSENWEIRHGAALGLRELVKKHAYGVSRVKGNTREENNLRNSRSLEDLASRLLTVFALDRFGDYVYDTVVAPVRESVAQTLAALLIHLDSTLSIKIFNCLEQLVLQDPLQTGLPNKIWEATHGGLLGIRYFVSIKTNFLFAHGLLENVVRIVLYGLNQSDDDVQSVAASILTPITSEFVKLNNSTIEILVTTIWSLLARLDDDISSSVGSIMDLLAKLCDHQEVLDILKNKALEHPSEWSFKSLVPKLYPFLRHSISSVRRAVLNLLIAFLSIKDDSTKNWLNGKVFRLVFQNILLEQNPELLQLSFDVYVALLEHYKVKHTEKTLDHVFSKHLQPILHLLNTPVGEKGKNYAMESQYILKPSQHYQLHPEKKRSISETTTDSDIPIPKNNEHINIDAPMIAGDITLLGLDVILNTRIMGAKAFALTLSMFQDSTLQSFFTNVLVRCLELPFSTPRMLAGIIVSQFCSSWLQKHPEGEKLPSFVSEIFSPVMNKQLLNRDEFPVFRELVPSLKALRTQCQSLLATFVDVGMLPQYKLPNVAIVVQGETEAGPHAFGVETAEKVYGEYYDKMFKSMNNSYKLLAKKPLEDSKHRVLMAINSAKESAKLRTGSILANYASSILLFDGLPLKLNPIIRSLMDSVKEERNEKLQTMAGESVVHLIQQLLENNKVNVSGKIVKNLCGFLCVDTSEVPDFSVNAEYKEKILTLIKESNSIAAQDDINLAKMSEEAQLKRKGGLITLKILFEVLGPSILQKLPQLRSILFDSLSDHENEEASKVDNEQGQKIVDSFGVLRALFPFMSDSLRSSEVFTRFPVLLTFLRSNLSVFRYSAARTFADLAKISSVEVMAYTIREILPLMNSAGSLSDRQGSTELIYHLSLSMETDVLPYVIFLIVPLLGRMSDSNEDVRNLATTTFASIIKLVPLEAGIADPKGLPEELVASRERERDFIQQMMDPSKAKPFKLPIAIKATLRKYQQDGVNWLAFLNKYHLHGILCDDMGLGKTLQTICIIASDQYLRKEDYEKTRSVESRALPSLIICPPSLTGHWENEFDQYAPFLKVVVYAGGPTVRLTLRPQLSDADIIVTSYDVARNDLAVLNKTEYNYCVLDEGHIIKNSQSKLAKAVKEITANHRLILTGTPIQNNVLELWSLFDFLMPGFLGTEKMFQERFAKPIAASRNSKTSSKEQEAGVLALEALHKQVLPFMLRRLKEDVLSDLPPKIIQDYYCELGDLQKQLYMDFTKKQKNVVEKDIENSEIADGKQHIFQALQYMRKLCNHPALVLSPNHPQLAQVQDYLKQTGLDLHDIINAPKLSALRTLLFECGIGEEDIDKKASQDQNFPIQNVISQHRALIFCQLKDMLDMVENDLFKKYMPSVTYMRLDGSIDPRDRQKVVRKFNEDPSIDCLLLTTKVGGLGLNLTGADTVIFVEHDWNPMNDLQAMDRAHRIGQKKVVNVYRIITKGTLEEKIMGLQKFKMNIASTVVNQQNSGLASMDTHQLLDLFDPDNVTSQDNEEKNNGDSQAAKGMEDIANETGLTGKAKEALGELKELWDPSQYEEEYNLDTFIKTLR</sequence>
<proteinExistence type="evidence at protein level"/>
<organism>
    <name type="scientific">Saccharomyces cerevisiae (strain ATCC 204508 / S288c)</name>
    <name type="common">Baker's yeast</name>
    <dbReference type="NCBI Taxonomy" id="559292"/>
    <lineage>
        <taxon>Eukaryota</taxon>
        <taxon>Fungi</taxon>
        <taxon>Dikarya</taxon>
        <taxon>Ascomycota</taxon>
        <taxon>Saccharomycotina</taxon>
        <taxon>Saccharomycetes</taxon>
        <taxon>Saccharomycetales</taxon>
        <taxon>Saccharomycetaceae</taxon>
        <taxon>Saccharomyces</taxon>
    </lineage>
</organism>
<protein>
    <recommendedName>
        <fullName>TATA-binding protein-associated factor MOT1</fullName>
        <shortName>TBP-associated factor MOT1</shortName>
        <ecNumber>3.6.4.-</ecNumber>
    </recommendedName>
    <alternativeName>
        <fullName>Modifier of transcription 1</fullName>
    </alternativeName>
</protein>
<feature type="chain" id="PRO_0000074335" description="TATA-binding protein-associated factor MOT1">
    <location>
        <begin position="1"/>
        <end position="1867"/>
    </location>
</feature>
<feature type="repeat" description="HEAT 1">
    <location>
        <begin position="289"/>
        <end position="326"/>
    </location>
</feature>
<feature type="repeat" description="HEAT 2">
    <location>
        <begin position="445"/>
        <end position="482"/>
    </location>
</feature>
<feature type="repeat" description="HEAT 3">
    <location>
        <begin position="541"/>
        <end position="578"/>
    </location>
</feature>
<feature type="repeat" description="HEAT 4">
    <location>
        <begin position="1108"/>
        <end position="1145"/>
    </location>
</feature>
<feature type="repeat" description="HEAT 5">
    <location>
        <begin position="1188"/>
        <end position="1225"/>
    </location>
</feature>
<feature type="domain" description="Helicase ATP-binding" evidence="2">
    <location>
        <begin position="1284"/>
        <end position="1457"/>
    </location>
</feature>
<feature type="repeat" description="HEAT 6">
    <location>
        <begin position="1495"/>
        <end position="1537"/>
    </location>
</feature>
<feature type="domain" description="Helicase C-terminal" evidence="3">
    <location>
        <begin position="1639"/>
        <end position="1787"/>
    </location>
</feature>
<feature type="region of interest" description="Disordered" evidence="4">
    <location>
        <begin position="169"/>
        <end position="228"/>
    </location>
</feature>
<feature type="region of interest" description="Disordered" evidence="4">
    <location>
        <begin position="1802"/>
        <end position="1822"/>
    </location>
</feature>
<feature type="short sequence motif" description="Nuclear localization signal" evidence="1">
    <location>
        <begin position="195"/>
        <end position="211"/>
    </location>
</feature>
<feature type="short sequence motif" description="DEGH box">
    <location>
        <begin position="1408"/>
        <end position="1411"/>
    </location>
</feature>
<feature type="compositionally biased region" description="Low complexity" evidence="4">
    <location>
        <begin position="181"/>
        <end position="203"/>
    </location>
</feature>
<feature type="binding site" evidence="2">
    <location>
        <begin position="1297"/>
        <end position="1304"/>
    </location>
    <ligand>
        <name>ATP</name>
        <dbReference type="ChEBI" id="CHEBI:30616"/>
    </ligand>
</feature>
<feature type="modified residue" description="Phosphoserine" evidence="14">
    <location>
        <position position="93"/>
    </location>
</feature>
<feature type="modified residue" description="Phosphoserine" evidence="11 12 13 14">
    <location>
        <position position="677"/>
    </location>
</feature>
<feature type="mutagenesis site" description="Temperature sensitive in mot1-301." evidence="8">
    <original>E</original>
    <variation>R</variation>
    <location>
        <position position="1226"/>
    </location>
</feature>
<feature type="mutagenesis site" description="No ATPase activity." evidence="5">
    <original>K</original>
    <variation>A</variation>
    <location>
        <position position="1303"/>
    </location>
</feature>
<dbReference type="EC" id="3.6.4.-"/>
<dbReference type="EMBL" id="M83224">
    <property type="protein sequence ID" value="AAA34786.1"/>
    <property type="molecule type" value="Genomic_DNA"/>
</dbReference>
<dbReference type="EMBL" id="U41849">
    <property type="protein sequence ID" value="AAB68257.1"/>
    <property type="molecule type" value="Genomic_DNA"/>
</dbReference>
<dbReference type="EMBL" id="BK006949">
    <property type="protein sequence ID" value="DAA11351.1"/>
    <property type="molecule type" value="Genomic_DNA"/>
</dbReference>
<dbReference type="PIR" id="S22775">
    <property type="entry name" value="S22775"/>
</dbReference>
<dbReference type="RefSeq" id="NP_015243.1">
    <property type="nucleotide sequence ID" value="NM_001183896.1"/>
</dbReference>
<dbReference type="SMR" id="P32333"/>
<dbReference type="BioGRID" id="36099">
    <property type="interactions" value="447"/>
</dbReference>
<dbReference type="ComplexPortal" id="CPX-1141">
    <property type="entry name" value="MOT1-TBP transcription regulation complex"/>
</dbReference>
<dbReference type="DIP" id="DIP-2418N"/>
<dbReference type="FunCoup" id="P32333">
    <property type="interactions" value="1750"/>
</dbReference>
<dbReference type="IntAct" id="P32333">
    <property type="interactions" value="88"/>
</dbReference>
<dbReference type="MINT" id="P32333"/>
<dbReference type="STRING" id="4932.YPL082C"/>
<dbReference type="CarbonylDB" id="P32333"/>
<dbReference type="iPTMnet" id="P32333"/>
<dbReference type="PaxDb" id="4932-YPL082C"/>
<dbReference type="PeptideAtlas" id="P32333"/>
<dbReference type="EnsemblFungi" id="YPL082C_mRNA">
    <property type="protein sequence ID" value="YPL082C"/>
    <property type="gene ID" value="YPL082C"/>
</dbReference>
<dbReference type="GeneID" id="856023"/>
<dbReference type="KEGG" id="sce:YPL082C"/>
<dbReference type="AGR" id="SGD:S000006003"/>
<dbReference type="SGD" id="S000006003">
    <property type="gene designation" value="MOT1"/>
</dbReference>
<dbReference type="VEuPathDB" id="FungiDB:YPL082C"/>
<dbReference type="eggNOG" id="KOG0392">
    <property type="taxonomic scope" value="Eukaryota"/>
</dbReference>
<dbReference type="GeneTree" id="ENSGT00940000157500"/>
<dbReference type="HOGENOM" id="CLU_000315_1_2_1"/>
<dbReference type="InParanoid" id="P32333"/>
<dbReference type="OMA" id="WYSDIAC"/>
<dbReference type="OrthoDB" id="10252227at2759"/>
<dbReference type="BioCyc" id="YEAST:G3O-33988-MONOMER"/>
<dbReference type="BioGRID-ORCS" id="856023">
    <property type="hits" value="2 hits in 10 CRISPR screens"/>
</dbReference>
<dbReference type="PRO" id="PR:P32333"/>
<dbReference type="Proteomes" id="UP000002311">
    <property type="component" value="Chromosome XVI"/>
</dbReference>
<dbReference type="RNAct" id="P32333">
    <property type="molecule type" value="protein"/>
</dbReference>
<dbReference type="GO" id="GO:0005739">
    <property type="term" value="C:mitochondrion"/>
    <property type="evidence" value="ECO:0007005"/>
    <property type="project" value="SGD"/>
</dbReference>
<dbReference type="GO" id="GO:0000228">
    <property type="term" value="C:nuclear chromosome"/>
    <property type="evidence" value="ECO:0000314"/>
    <property type="project" value="SGD"/>
</dbReference>
<dbReference type="GO" id="GO:0005634">
    <property type="term" value="C:nucleus"/>
    <property type="evidence" value="ECO:0000314"/>
    <property type="project" value="SGD"/>
</dbReference>
<dbReference type="GO" id="GO:0005667">
    <property type="term" value="C:transcription regulator complex"/>
    <property type="evidence" value="ECO:0000353"/>
    <property type="project" value="ComplexPortal"/>
</dbReference>
<dbReference type="GO" id="GO:0005524">
    <property type="term" value="F:ATP binding"/>
    <property type="evidence" value="ECO:0007669"/>
    <property type="project" value="UniProtKB-KW"/>
</dbReference>
<dbReference type="GO" id="GO:0016887">
    <property type="term" value="F:ATP hydrolysis activity"/>
    <property type="evidence" value="ECO:0000314"/>
    <property type="project" value="SGD"/>
</dbReference>
<dbReference type="GO" id="GO:0003677">
    <property type="term" value="F:DNA binding"/>
    <property type="evidence" value="ECO:0000314"/>
    <property type="project" value="SGD"/>
</dbReference>
<dbReference type="GO" id="GO:0004386">
    <property type="term" value="F:helicase activity"/>
    <property type="evidence" value="ECO:0007669"/>
    <property type="project" value="UniProtKB-KW"/>
</dbReference>
<dbReference type="GO" id="GO:0017025">
    <property type="term" value="F:TBP-class protein binding"/>
    <property type="evidence" value="ECO:0000353"/>
    <property type="project" value="SGD"/>
</dbReference>
<dbReference type="GO" id="GO:0045892">
    <property type="term" value="P:negative regulation of DNA-templated transcription"/>
    <property type="evidence" value="ECO:0000314"/>
    <property type="project" value="ComplexPortal"/>
</dbReference>
<dbReference type="GO" id="GO:0042790">
    <property type="term" value="P:nucleolar large rRNA transcription by RNA polymerase I"/>
    <property type="evidence" value="ECO:0000314"/>
    <property type="project" value="SGD"/>
</dbReference>
<dbReference type="GO" id="GO:0045898">
    <property type="term" value="P:regulation of RNA polymerase II transcription preinitiation complex assembly"/>
    <property type="evidence" value="ECO:0000315"/>
    <property type="project" value="SGD"/>
</dbReference>
<dbReference type="GO" id="GO:0006357">
    <property type="term" value="P:regulation of transcription by RNA polymerase II"/>
    <property type="evidence" value="ECO:0000314"/>
    <property type="project" value="SGD"/>
</dbReference>
<dbReference type="GO" id="GO:0006364">
    <property type="term" value="P:rRNA processing"/>
    <property type="evidence" value="ECO:0000315"/>
    <property type="project" value="SGD"/>
</dbReference>
<dbReference type="CDD" id="cd17999">
    <property type="entry name" value="DEXHc_Mot1"/>
    <property type="match status" value="1"/>
</dbReference>
<dbReference type="CDD" id="cd18793">
    <property type="entry name" value="SF2_C_SNF"/>
    <property type="match status" value="1"/>
</dbReference>
<dbReference type="FunFam" id="3.40.50.10810:FF:000009">
    <property type="entry name" value="B-TFIID TATA-box-binding protein-associated factor 1"/>
    <property type="match status" value="1"/>
</dbReference>
<dbReference type="FunFam" id="1.25.10.10:FF:000533">
    <property type="entry name" value="MOT1p protein"/>
    <property type="match status" value="1"/>
</dbReference>
<dbReference type="FunFam" id="3.40.50.300:FF:000428">
    <property type="entry name" value="TATA-binding protein-associated factor 172"/>
    <property type="match status" value="1"/>
</dbReference>
<dbReference type="Gene3D" id="1.25.10.10">
    <property type="entry name" value="Leucine-rich Repeat Variant"/>
    <property type="match status" value="2"/>
</dbReference>
<dbReference type="Gene3D" id="3.40.50.300">
    <property type="entry name" value="P-loop containing nucleotide triphosphate hydrolases"/>
    <property type="match status" value="1"/>
</dbReference>
<dbReference type="Gene3D" id="3.40.50.10810">
    <property type="entry name" value="Tandem AAA-ATPase domain"/>
    <property type="match status" value="1"/>
</dbReference>
<dbReference type="InterPro" id="IPR011989">
    <property type="entry name" value="ARM-like"/>
</dbReference>
<dbReference type="InterPro" id="IPR016024">
    <property type="entry name" value="ARM-type_fold"/>
</dbReference>
<dbReference type="InterPro" id="IPR014001">
    <property type="entry name" value="Helicase_ATP-bd"/>
</dbReference>
<dbReference type="InterPro" id="IPR001650">
    <property type="entry name" value="Helicase_C-like"/>
</dbReference>
<dbReference type="InterPro" id="IPR044972">
    <property type="entry name" value="Mot1"/>
</dbReference>
<dbReference type="InterPro" id="IPR044078">
    <property type="entry name" value="Mot1_ATP-bd"/>
</dbReference>
<dbReference type="InterPro" id="IPR022707">
    <property type="entry name" value="Mot1_central_dom"/>
</dbReference>
<dbReference type="InterPro" id="IPR027417">
    <property type="entry name" value="P-loop_NTPase"/>
</dbReference>
<dbReference type="InterPro" id="IPR038718">
    <property type="entry name" value="SNF2-like_sf"/>
</dbReference>
<dbReference type="InterPro" id="IPR049730">
    <property type="entry name" value="SNF2/RAD54-like_C"/>
</dbReference>
<dbReference type="InterPro" id="IPR000330">
    <property type="entry name" value="SNF2_N"/>
</dbReference>
<dbReference type="PANTHER" id="PTHR36498">
    <property type="entry name" value="TATA-BINDING PROTEIN-ASSOCIATED FACTOR 172"/>
    <property type="match status" value="1"/>
</dbReference>
<dbReference type="PANTHER" id="PTHR36498:SF1">
    <property type="entry name" value="TATA-BINDING PROTEIN-ASSOCIATED FACTOR 172"/>
    <property type="match status" value="1"/>
</dbReference>
<dbReference type="Pfam" id="PF12054">
    <property type="entry name" value="DUF3535"/>
    <property type="match status" value="1"/>
</dbReference>
<dbReference type="Pfam" id="PF00271">
    <property type="entry name" value="Helicase_C"/>
    <property type="match status" value="1"/>
</dbReference>
<dbReference type="Pfam" id="PF00176">
    <property type="entry name" value="SNF2-rel_dom"/>
    <property type="match status" value="1"/>
</dbReference>
<dbReference type="SMART" id="SM00487">
    <property type="entry name" value="DEXDc"/>
    <property type="match status" value="1"/>
</dbReference>
<dbReference type="SMART" id="SM00490">
    <property type="entry name" value="HELICc"/>
    <property type="match status" value="1"/>
</dbReference>
<dbReference type="SUPFAM" id="SSF48371">
    <property type="entry name" value="ARM repeat"/>
    <property type="match status" value="1"/>
</dbReference>
<dbReference type="SUPFAM" id="SSF52540">
    <property type="entry name" value="P-loop containing nucleoside triphosphate hydrolases"/>
    <property type="match status" value="2"/>
</dbReference>
<dbReference type="PROSITE" id="PS51192">
    <property type="entry name" value="HELICASE_ATP_BIND_1"/>
    <property type="match status" value="1"/>
</dbReference>
<dbReference type="PROSITE" id="PS51194">
    <property type="entry name" value="HELICASE_CTER"/>
    <property type="match status" value="1"/>
</dbReference>
<comment type="function">
    <text evidence="5 6 9">Regulates transcription in association with TATA binding protein (TBP). Removes TBP from the TATA box via its C-terminal ATPase activity. Both transcription activation and repression require its ATPase activity.</text>
</comment>
<comment type="subunit">
    <text evidence="6">Forms a complex with TBP which binds TATA DNA with high affinity but with altered specificity.</text>
</comment>
<comment type="interaction">
    <interactant intactId="EBI-11152">
        <id>P32333</id>
    </interactant>
    <interactant intactId="EBI-19129">
        <id>P13393</id>
        <label>SPT15</label>
    </interactant>
    <organismsDiffer>false</organismsDiffer>
    <experiments>8</experiments>
</comment>
<comment type="subcellular location">
    <subcellularLocation>
        <location>Mitochondrion</location>
    </subcellularLocation>
    <subcellularLocation>
        <location>Nucleus</location>
    </subcellularLocation>
    <text>Localized on chromatin. Specifically localized to the promoters of the genes it regulates.</text>
</comment>
<comment type="miscellaneous">
    <text evidence="7">Present with 6560 molecules/cell in log phase SD medium.</text>
</comment>
<comment type="similarity">
    <text evidence="10">Belongs to the SNF2/RAD54 helicase family.</text>
</comment>
<keyword id="KW-0067">ATP-binding</keyword>
<keyword id="KW-0238">DNA-binding</keyword>
<keyword id="KW-0347">Helicase</keyword>
<keyword id="KW-0378">Hydrolase</keyword>
<keyword id="KW-0496">Mitochondrion</keyword>
<keyword id="KW-0547">Nucleotide-binding</keyword>
<keyword id="KW-0539">Nucleus</keyword>
<keyword id="KW-0597">Phosphoprotein</keyword>
<keyword id="KW-1185">Reference proteome</keyword>
<keyword id="KW-0677">Repeat</keyword>
<keyword id="KW-0804">Transcription</keyword>
<keyword id="KW-0805">Transcription regulation</keyword>
<accession>P32333</accession>
<accession>D6W3T5</accession>